<feature type="chain" id="PRO_0000210834" description="Fe(2+) transporter FeoB">
    <location>
        <begin position="1"/>
        <end position="751"/>
    </location>
</feature>
<feature type="transmembrane region" description="Helical" evidence="3">
    <location>
        <begin position="276"/>
        <end position="296"/>
    </location>
</feature>
<feature type="transmembrane region" description="Helical" evidence="3">
    <location>
        <begin position="341"/>
        <end position="361"/>
    </location>
</feature>
<feature type="transmembrane region" description="Helical" evidence="3">
    <location>
        <begin position="385"/>
        <end position="405"/>
    </location>
</feature>
<feature type="transmembrane region" description="Helical" evidence="3">
    <location>
        <begin position="422"/>
        <end position="442"/>
    </location>
</feature>
<feature type="transmembrane region" description="Helical" evidence="3">
    <location>
        <begin position="447"/>
        <end position="467"/>
    </location>
</feature>
<feature type="transmembrane region" description="Helical" evidence="3">
    <location>
        <begin position="512"/>
        <end position="532"/>
    </location>
</feature>
<feature type="transmembrane region" description="Helical" evidence="3">
    <location>
        <begin position="657"/>
        <end position="677"/>
    </location>
</feature>
<feature type="transmembrane region" description="Helical" evidence="3">
    <location>
        <begin position="685"/>
        <end position="705"/>
    </location>
</feature>
<feature type="transmembrane region" description="Helical" evidence="3">
    <location>
        <begin position="715"/>
        <end position="735"/>
    </location>
</feature>
<feature type="domain" description="FeoB-type G" evidence="4">
    <location>
        <begin position="1"/>
        <end position="167"/>
    </location>
</feature>
<feature type="binding site" evidence="4">
    <location>
        <begin position="8"/>
        <end position="15"/>
    </location>
    <ligand>
        <name>GTP</name>
        <dbReference type="ChEBI" id="CHEBI:37565"/>
        <label>1</label>
    </ligand>
</feature>
<feature type="binding site" evidence="4">
    <location>
        <begin position="33"/>
        <end position="37"/>
    </location>
    <ligand>
        <name>GTP</name>
        <dbReference type="ChEBI" id="CHEBI:37565"/>
        <label>2</label>
    </ligand>
</feature>
<feature type="binding site" evidence="4">
    <location>
        <begin position="54"/>
        <end position="57"/>
    </location>
    <ligand>
        <name>GTP</name>
        <dbReference type="ChEBI" id="CHEBI:37565"/>
        <label>3</label>
    </ligand>
</feature>
<feature type="binding site" evidence="4">
    <location>
        <begin position="118"/>
        <end position="121"/>
    </location>
    <ligand>
        <name>GTP</name>
        <dbReference type="ChEBI" id="CHEBI:37565"/>
    </ligand>
</feature>
<feature type="binding site" evidence="4">
    <location>
        <begin position="147"/>
        <end position="149"/>
    </location>
    <ligand>
        <name>GTP</name>
        <dbReference type="ChEBI" id="CHEBI:37565"/>
    </ligand>
</feature>
<evidence type="ECO:0000250" key="1">
    <source>
        <dbReference type="UniProtKB" id="P33650"/>
    </source>
</evidence>
<evidence type="ECO:0000250" key="2">
    <source>
        <dbReference type="UniProtKB" id="Q8GNS3"/>
    </source>
</evidence>
<evidence type="ECO:0000255" key="3"/>
<evidence type="ECO:0000255" key="4">
    <source>
        <dbReference type="PROSITE-ProRule" id="PRU01048"/>
    </source>
</evidence>
<evidence type="ECO:0000305" key="5"/>
<dbReference type="EMBL" id="AE017354">
    <property type="protein sequence ID" value="AAU28715.1"/>
    <property type="molecule type" value="Genomic_DNA"/>
</dbReference>
<dbReference type="RefSeq" id="WP_010948357.1">
    <property type="nucleotide sequence ID" value="NC_002942.5"/>
</dbReference>
<dbReference type="RefSeq" id="YP_096662.1">
    <property type="nucleotide sequence ID" value="NC_002942.5"/>
</dbReference>
<dbReference type="SMR" id="Q5ZS62"/>
<dbReference type="STRING" id="272624.lpg2657"/>
<dbReference type="PaxDb" id="272624-lpg2657"/>
<dbReference type="GeneID" id="57036657"/>
<dbReference type="KEGG" id="lpn:lpg2657"/>
<dbReference type="PATRIC" id="fig|272624.6.peg.2837"/>
<dbReference type="eggNOG" id="COG0370">
    <property type="taxonomic scope" value="Bacteria"/>
</dbReference>
<dbReference type="HOGENOM" id="CLU_013350_3_0_6"/>
<dbReference type="OrthoDB" id="9809127at2"/>
<dbReference type="Proteomes" id="UP000000609">
    <property type="component" value="Chromosome"/>
</dbReference>
<dbReference type="GO" id="GO:0005886">
    <property type="term" value="C:plasma membrane"/>
    <property type="evidence" value="ECO:0007669"/>
    <property type="project" value="UniProtKB-SubCell"/>
</dbReference>
<dbReference type="GO" id="GO:0015093">
    <property type="term" value="F:ferrous iron transmembrane transporter activity"/>
    <property type="evidence" value="ECO:0007669"/>
    <property type="project" value="InterPro"/>
</dbReference>
<dbReference type="GO" id="GO:0005525">
    <property type="term" value="F:GTP binding"/>
    <property type="evidence" value="ECO:0007669"/>
    <property type="project" value="UniProtKB-KW"/>
</dbReference>
<dbReference type="CDD" id="cd01879">
    <property type="entry name" value="FeoB"/>
    <property type="match status" value="1"/>
</dbReference>
<dbReference type="FunFam" id="3.40.50.300:FF:000426">
    <property type="entry name" value="Ferrous iron transport protein B"/>
    <property type="match status" value="1"/>
</dbReference>
<dbReference type="Gene3D" id="1.10.287.1770">
    <property type="match status" value="1"/>
</dbReference>
<dbReference type="Gene3D" id="3.40.50.300">
    <property type="entry name" value="P-loop containing nucleotide triphosphate hydrolases"/>
    <property type="match status" value="1"/>
</dbReference>
<dbReference type="InterPro" id="IPR003373">
    <property type="entry name" value="Fe2_transport_prot-B"/>
</dbReference>
<dbReference type="InterPro" id="IPR011640">
    <property type="entry name" value="Fe2_transport_prot_B_C"/>
</dbReference>
<dbReference type="InterPro" id="IPR050860">
    <property type="entry name" value="FeoB_GTPase"/>
</dbReference>
<dbReference type="InterPro" id="IPR030389">
    <property type="entry name" value="G_FEOB_dom"/>
</dbReference>
<dbReference type="InterPro" id="IPR011642">
    <property type="entry name" value="Gate_dom"/>
</dbReference>
<dbReference type="InterPro" id="IPR006073">
    <property type="entry name" value="GTP-bd"/>
</dbReference>
<dbReference type="InterPro" id="IPR027417">
    <property type="entry name" value="P-loop_NTPase"/>
</dbReference>
<dbReference type="NCBIfam" id="TIGR00437">
    <property type="entry name" value="feoB"/>
    <property type="match status" value="1"/>
</dbReference>
<dbReference type="NCBIfam" id="NF007105">
    <property type="entry name" value="PRK09554.1"/>
    <property type="match status" value="1"/>
</dbReference>
<dbReference type="PANTHER" id="PTHR43185:SF1">
    <property type="entry name" value="FE(2+) TRANSPORTER FEOB"/>
    <property type="match status" value="1"/>
</dbReference>
<dbReference type="PANTHER" id="PTHR43185">
    <property type="entry name" value="FERROUS IRON TRANSPORT PROTEIN B"/>
    <property type="match status" value="1"/>
</dbReference>
<dbReference type="Pfam" id="PF07664">
    <property type="entry name" value="FeoB_C"/>
    <property type="match status" value="1"/>
</dbReference>
<dbReference type="Pfam" id="PF02421">
    <property type="entry name" value="FeoB_N"/>
    <property type="match status" value="1"/>
</dbReference>
<dbReference type="Pfam" id="PF07670">
    <property type="entry name" value="Gate"/>
    <property type="match status" value="2"/>
</dbReference>
<dbReference type="PRINTS" id="PR00326">
    <property type="entry name" value="GTP1OBG"/>
</dbReference>
<dbReference type="SUPFAM" id="SSF52540">
    <property type="entry name" value="P-loop containing nucleoside triphosphate hydrolases"/>
    <property type="match status" value="1"/>
</dbReference>
<dbReference type="PROSITE" id="PS51711">
    <property type="entry name" value="G_FEOB"/>
    <property type="match status" value="1"/>
</dbReference>
<organism>
    <name type="scientific">Legionella pneumophila subsp. pneumophila (strain Philadelphia 1 / ATCC 33152 / DSM 7513)</name>
    <dbReference type="NCBI Taxonomy" id="272624"/>
    <lineage>
        <taxon>Bacteria</taxon>
        <taxon>Pseudomonadati</taxon>
        <taxon>Pseudomonadota</taxon>
        <taxon>Gammaproteobacteria</taxon>
        <taxon>Legionellales</taxon>
        <taxon>Legionellaceae</taxon>
        <taxon>Legionella</taxon>
    </lineage>
</organism>
<keyword id="KW-0997">Cell inner membrane</keyword>
<keyword id="KW-1003">Cell membrane</keyword>
<keyword id="KW-0342">GTP-binding</keyword>
<keyword id="KW-0406">Ion transport</keyword>
<keyword id="KW-0408">Iron</keyword>
<keyword id="KW-0410">Iron transport</keyword>
<keyword id="KW-0472">Membrane</keyword>
<keyword id="KW-0547">Nucleotide-binding</keyword>
<keyword id="KW-1185">Reference proteome</keyword>
<keyword id="KW-0812">Transmembrane</keyword>
<keyword id="KW-1133">Transmembrane helix</keyword>
<keyword id="KW-0813">Transport</keyword>
<reference key="1">
    <citation type="journal article" date="2004" name="Science">
        <title>The genomic sequence of the accidental pathogen Legionella pneumophila.</title>
        <authorList>
            <person name="Chien M."/>
            <person name="Morozova I."/>
            <person name="Shi S."/>
            <person name="Sheng H."/>
            <person name="Chen J."/>
            <person name="Gomez S.M."/>
            <person name="Asamani G."/>
            <person name="Hill K."/>
            <person name="Nuara J."/>
            <person name="Feder M."/>
            <person name="Rineer J."/>
            <person name="Greenberg J.J."/>
            <person name="Steshenko V."/>
            <person name="Park S.H."/>
            <person name="Zhao B."/>
            <person name="Teplitskaya E."/>
            <person name="Edwards J.R."/>
            <person name="Pampou S."/>
            <person name="Georghiou A."/>
            <person name="Chou I.-C."/>
            <person name="Iannuccilli W."/>
            <person name="Ulz M.E."/>
            <person name="Kim D.H."/>
            <person name="Geringer-Sameth A."/>
            <person name="Goldsberry C."/>
            <person name="Morozov P."/>
            <person name="Fischer S.G."/>
            <person name="Segal G."/>
            <person name="Qu X."/>
            <person name="Rzhetsky A."/>
            <person name="Zhang P."/>
            <person name="Cayanis E."/>
            <person name="De Jong P.J."/>
            <person name="Ju J."/>
            <person name="Kalachikov S."/>
            <person name="Shuman H.A."/>
            <person name="Russo J.J."/>
        </authorList>
    </citation>
    <scope>NUCLEOTIDE SEQUENCE [LARGE SCALE GENOMIC DNA]</scope>
    <source>
        <strain>Philadelphia 1 / ATCC 33152 / DSM 7513</strain>
    </source>
</reference>
<comment type="function">
    <text evidence="2">Probable transporter of a GTP-driven Fe(2+) uptake system.</text>
</comment>
<comment type="subcellular location">
    <subcellularLocation>
        <location evidence="1">Cell inner membrane</location>
        <topology evidence="1">Multi-pass membrane protein</topology>
    </subcellularLocation>
</comment>
<comment type="similarity">
    <text evidence="4">Belongs to the TRAFAC class TrmE-Era-EngA-EngB-Septin-like GTPase superfamily. FeoB GTPase (TC 9.A.8) family.</text>
</comment>
<protein>
    <recommendedName>
        <fullName evidence="5">Fe(2+) transporter FeoB</fullName>
    </recommendedName>
    <alternativeName>
        <fullName>Ferrous iron transport protein B</fullName>
    </alternativeName>
</protein>
<gene>
    <name type="primary">feoB</name>
    <name type="ordered locus">lpg2657</name>
</gene>
<name>FEOB_LEGPH</name>
<proteinExistence type="inferred from homology"/>
<accession>Q5ZS62</accession>
<sequence>MTHALLIGNPNCGKTTLFNALTNANQRVGNWPGVTVEKKTGEFLLGEHLIEITDLPGVYSLVANAEGISQDEQIAAQSVIDLEYDCIINVIDACHLERHLYLTSQLFELGKPVVVALNMMDIAEHRGISIDTEKLESLLGCSVIPIQAHKNIGIPALQQSLLHCSQKIKPLKLSLSVAAQQILNDLENQLISKGYKNSFAYYFSRRLAEGDTLIGEKAFTESLLIKLQETEQNLDVLLADARYQKIHEIVTLVQKKHSDASEHFTAKLDKLVLHRFLALPIFFAMMYLMFLFAINIGGAFQDFFDISTETIFVQGSGWLLQQLHAPHWVIALVANGVGKGINTTITFIPVIAAMFFFLSLLETSGYMARAAFVVDKAMRAMGLPGKSFVPMIVGFGCNVPAIMAARTLDSERDRLLTVMMSPFMSCSARLAIYAVFVAAFFPSGGHNVVFSLYLIGILMAVFTGYILRKTTLKGHASPLILELPAYHRPSLRRLLRETSMRLRFFVYRAGKLIIPICVILGGLNAITWGGGISSGEANTDSLLSIMGQWITPLFAPMGIHQDNWPATVGLLTGMLAKEVVVGTLNSLYAQVGHVGEIAAAHFDFWGGIKAAFGSIPANLSELGSALWNPVSASAADSELSQSVYGIMSRRFDGAVGAYAYLLFVLLYIPCVSTMAVIRQEANKRFMWTSIVWSFVVAYATSVVFYQGAKFLDHPQQSMVWILAMSLSLLFVLAVFRYSQYGMGRQNAAANT</sequence>